<comment type="function">
    <text evidence="1">Peptide chain release factor 2 directs the termination of translation in response to the peptide chain termination codons UGA and UAA.</text>
</comment>
<comment type="subcellular location">
    <subcellularLocation>
        <location evidence="1">Cytoplasm</location>
    </subcellularLocation>
</comment>
<comment type="PTM">
    <text evidence="1">Methylated by PrmC. Methylation increases the termination efficiency of RF2.</text>
</comment>
<comment type="similarity">
    <text evidence="1">Belongs to the prokaryotic/mitochondrial release factor family.</text>
</comment>
<gene>
    <name evidence="1" type="primary">prfB</name>
    <name type="ordered locus">Francci3_0791</name>
</gene>
<sequence>MAVDLSEEIKQLDATLTGIETVLDVEGLRRRAEDLERQAADPDLWSDQDRAQAVTRRLSSTRGDIARVEGLRRRLDDIAAAADLGDEDLLAEAAADLPRLSSDIAGLEVRTLLSGEYDERDAIVQLSAGAGGVDAADWTAMLLRMYLRWAERHGYATEVFDTSEAEEAGLKSATFQVKAPYAYGTLRSEHGVHRLVRISPFDNQNRRQTSFAGVEVTPVVELSDHVDIDDKDLRIDIFRSSGPGGQGVNTTDSAVRITHLPTGIVVTCQNERSQLQNKAAAMIVLQAKLLERRRAEEAAEKQRITGGPQDVSFGSQIRNYVLHPYQMVKDLRTDTETSNTSGVLDGELDDFIDAEIRWRRSVENQA</sequence>
<proteinExistence type="inferred from homology"/>
<organism>
    <name type="scientific">Frankia casuarinae (strain DSM 45818 / CECT 9043 / HFP020203 / CcI3)</name>
    <dbReference type="NCBI Taxonomy" id="106370"/>
    <lineage>
        <taxon>Bacteria</taxon>
        <taxon>Bacillati</taxon>
        <taxon>Actinomycetota</taxon>
        <taxon>Actinomycetes</taxon>
        <taxon>Frankiales</taxon>
        <taxon>Frankiaceae</taxon>
        <taxon>Frankia</taxon>
    </lineage>
</organism>
<name>RF2_FRACC</name>
<keyword id="KW-0963">Cytoplasm</keyword>
<keyword id="KW-0488">Methylation</keyword>
<keyword id="KW-0648">Protein biosynthesis</keyword>
<keyword id="KW-1185">Reference proteome</keyword>
<feature type="chain" id="PRO_1000075525" description="Peptide chain release factor 2">
    <location>
        <begin position="1"/>
        <end position="366"/>
    </location>
</feature>
<feature type="modified residue" description="N5-methylglutamine" evidence="1">
    <location>
        <position position="246"/>
    </location>
</feature>
<accession>Q2JEW7</accession>
<evidence type="ECO:0000255" key="1">
    <source>
        <dbReference type="HAMAP-Rule" id="MF_00094"/>
    </source>
</evidence>
<dbReference type="EMBL" id="CP000249">
    <property type="protein sequence ID" value="ABD10175.1"/>
    <property type="molecule type" value="Genomic_DNA"/>
</dbReference>
<dbReference type="RefSeq" id="WP_011435244.1">
    <property type="nucleotide sequence ID" value="NZ_JENI01000002.1"/>
</dbReference>
<dbReference type="SMR" id="Q2JEW7"/>
<dbReference type="STRING" id="106370.Francci3_0791"/>
<dbReference type="KEGG" id="fra:Francci3_0791"/>
<dbReference type="eggNOG" id="COG1186">
    <property type="taxonomic scope" value="Bacteria"/>
</dbReference>
<dbReference type="HOGENOM" id="CLU_036856_6_0_11"/>
<dbReference type="OrthoDB" id="9806673at2"/>
<dbReference type="PhylomeDB" id="Q2JEW7"/>
<dbReference type="Proteomes" id="UP000001937">
    <property type="component" value="Chromosome"/>
</dbReference>
<dbReference type="GO" id="GO:0005737">
    <property type="term" value="C:cytoplasm"/>
    <property type="evidence" value="ECO:0007669"/>
    <property type="project" value="UniProtKB-SubCell"/>
</dbReference>
<dbReference type="GO" id="GO:0016149">
    <property type="term" value="F:translation release factor activity, codon specific"/>
    <property type="evidence" value="ECO:0007669"/>
    <property type="project" value="UniProtKB-UniRule"/>
</dbReference>
<dbReference type="FunFam" id="3.30.160.20:FF:000010">
    <property type="entry name" value="Peptide chain release factor 2"/>
    <property type="match status" value="1"/>
</dbReference>
<dbReference type="Gene3D" id="3.30.160.20">
    <property type="match status" value="1"/>
</dbReference>
<dbReference type="Gene3D" id="3.30.70.1660">
    <property type="match status" value="1"/>
</dbReference>
<dbReference type="Gene3D" id="1.20.58.410">
    <property type="entry name" value="Release factor"/>
    <property type="match status" value="1"/>
</dbReference>
<dbReference type="HAMAP" id="MF_00094">
    <property type="entry name" value="Rel_fac_2"/>
    <property type="match status" value="1"/>
</dbReference>
<dbReference type="InterPro" id="IPR005139">
    <property type="entry name" value="PCRF"/>
</dbReference>
<dbReference type="InterPro" id="IPR000352">
    <property type="entry name" value="Pep_chain_release_fac_I"/>
</dbReference>
<dbReference type="InterPro" id="IPR045853">
    <property type="entry name" value="Pep_chain_release_fac_I_sf"/>
</dbReference>
<dbReference type="InterPro" id="IPR004374">
    <property type="entry name" value="PrfB"/>
</dbReference>
<dbReference type="NCBIfam" id="TIGR00020">
    <property type="entry name" value="prfB"/>
    <property type="match status" value="1"/>
</dbReference>
<dbReference type="PANTHER" id="PTHR43116:SF3">
    <property type="entry name" value="CLASS I PEPTIDE CHAIN RELEASE FACTOR"/>
    <property type="match status" value="1"/>
</dbReference>
<dbReference type="PANTHER" id="PTHR43116">
    <property type="entry name" value="PEPTIDE CHAIN RELEASE FACTOR 2"/>
    <property type="match status" value="1"/>
</dbReference>
<dbReference type="Pfam" id="PF03462">
    <property type="entry name" value="PCRF"/>
    <property type="match status" value="1"/>
</dbReference>
<dbReference type="Pfam" id="PF00472">
    <property type="entry name" value="RF-1"/>
    <property type="match status" value="1"/>
</dbReference>
<dbReference type="SMART" id="SM00937">
    <property type="entry name" value="PCRF"/>
    <property type="match status" value="1"/>
</dbReference>
<dbReference type="SUPFAM" id="SSF75620">
    <property type="entry name" value="Release factor"/>
    <property type="match status" value="1"/>
</dbReference>
<dbReference type="PROSITE" id="PS00745">
    <property type="entry name" value="RF_PROK_I"/>
    <property type="match status" value="1"/>
</dbReference>
<protein>
    <recommendedName>
        <fullName evidence="1">Peptide chain release factor 2</fullName>
        <shortName evidence="1">RF-2</shortName>
    </recommendedName>
</protein>
<reference key="1">
    <citation type="journal article" date="2007" name="Genome Res.">
        <title>Genome characteristics of facultatively symbiotic Frankia sp. strains reflect host range and host plant biogeography.</title>
        <authorList>
            <person name="Normand P."/>
            <person name="Lapierre P."/>
            <person name="Tisa L.S."/>
            <person name="Gogarten J.P."/>
            <person name="Alloisio N."/>
            <person name="Bagnarol E."/>
            <person name="Bassi C.A."/>
            <person name="Berry A.M."/>
            <person name="Bickhart D.M."/>
            <person name="Choisne N."/>
            <person name="Couloux A."/>
            <person name="Cournoyer B."/>
            <person name="Cruveiller S."/>
            <person name="Daubin V."/>
            <person name="Demange N."/>
            <person name="Francino M.P."/>
            <person name="Goltsman E."/>
            <person name="Huang Y."/>
            <person name="Kopp O.R."/>
            <person name="Labarre L."/>
            <person name="Lapidus A."/>
            <person name="Lavire C."/>
            <person name="Marechal J."/>
            <person name="Martinez M."/>
            <person name="Mastronunzio J.E."/>
            <person name="Mullin B.C."/>
            <person name="Niemann J."/>
            <person name="Pujic P."/>
            <person name="Rawnsley T."/>
            <person name="Rouy Z."/>
            <person name="Schenowitz C."/>
            <person name="Sellstedt A."/>
            <person name="Tavares F."/>
            <person name="Tomkins J.P."/>
            <person name="Vallenet D."/>
            <person name="Valverde C."/>
            <person name="Wall L.G."/>
            <person name="Wang Y."/>
            <person name="Medigue C."/>
            <person name="Benson D.R."/>
        </authorList>
    </citation>
    <scope>NUCLEOTIDE SEQUENCE [LARGE SCALE GENOMIC DNA]</scope>
    <source>
        <strain>DSM 45818 / CECT 9043 / HFP020203 / CcI3</strain>
    </source>
</reference>